<comment type="function">
    <text evidence="2">GTP hydrolase that promotes the GTP-dependent binding of aminoacyl-tRNA to the A-site of ribosomes during protein biosynthesis.</text>
</comment>
<comment type="catalytic activity">
    <reaction evidence="2">
        <text>GTP + H2O = GDP + phosphate + H(+)</text>
        <dbReference type="Rhea" id="RHEA:19669"/>
        <dbReference type="ChEBI" id="CHEBI:15377"/>
        <dbReference type="ChEBI" id="CHEBI:15378"/>
        <dbReference type="ChEBI" id="CHEBI:37565"/>
        <dbReference type="ChEBI" id="CHEBI:43474"/>
        <dbReference type="ChEBI" id="CHEBI:58189"/>
        <dbReference type="EC" id="3.6.5.3"/>
    </reaction>
    <physiologicalReaction direction="left-to-right" evidence="2">
        <dbReference type="Rhea" id="RHEA:19670"/>
    </physiologicalReaction>
</comment>
<comment type="subunit">
    <text evidence="2">Monomer.</text>
</comment>
<comment type="subcellular location">
    <subcellularLocation>
        <location evidence="2">Cytoplasm</location>
    </subcellularLocation>
</comment>
<comment type="similarity">
    <text evidence="2">Belongs to the TRAFAC class translation factor GTPase superfamily. Classic translation factor GTPase family. EF-Tu/EF-1A subfamily.</text>
</comment>
<protein>
    <recommendedName>
        <fullName evidence="2">Elongation factor Tu</fullName>
        <shortName evidence="2">EF-Tu</shortName>
        <ecNumber evidence="2">3.6.5.3</ecNumber>
    </recommendedName>
</protein>
<sequence length="397" mass="43243">MAKEKFERSKPHVNVGTIGHVDHGKTTLTAALTRVCSEVWGGQAVAFDGIDNAPEEKARGITIATSHVEYESPIRHYAHVDCPGHADYVKNMITGAAQMDGAILVCSAADGPMPQTREHILLARQVGVPYIVVFLNKADMVDDEELLELVEMEVRDLLSQYEFPGDDTPIIVGSALLALEGKDDNGMGTSAVKKLVETLDAYIPEPERAIDKPFLMPIEDVFSISGRGTVVTGRVERGIVRVGEEVEIVGIKDTTKTTCTGVEMFRKLLDEGRAGENVGVLLRGTKRDDVERGQVLAKPGTITPHTVFESEVYVLSKDEGGRHTPFFKGYRPQFYFRTTDVTGACELPEGVEMVMPGDNVKMKVSLIAPIAMEEGLRFAIREGGRTVGAGVVAKIFE</sequence>
<organism>
    <name type="scientific">Hahella chejuensis (strain KCTC 2396)</name>
    <dbReference type="NCBI Taxonomy" id="349521"/>
    <lineage>
        <taxon>Bacteria</taxon>
        <taxon>Pseudomonadati</taxon>
        <taxon>Pseudomonadota</taxon>
        <taxon>Gammaproteobacteria</taxon>
        <taxon>Oceanospirillales</taxon>
        <taxon>Hahellaceae</taxon>
        <taxon>Hahella</taxon>
    </lineage>
</organism>
<keyword id="KW-0963">Cytoplasm</keyword>
<keyword id="KW-0251">Elongation factor</keyword>
<keyword id="KW-0342">GTP-binding</keyword>
<keyword id="KW-0378">Hydrolase</keyword>
<keyword id="KW-0460">Magnesium</keyword>
<keyword id="KW-0479">Metal-binding</keyword>
<keyword id="KW-0547">Nucleotide-binding</keyword>
<keyword id="KW-0648">Protein biosynthesis</keyword>
<keyword id="KW-1185">Reference proteome</keyword>
<proteinExistence type="inferred from homology"/>
<gene>
    <name evidence="2" type="primary">tuf1</name>
    <name type="ordered locus">HCH_06219</name>
</gene>
<gene>
    <name evidence="2" type="primary">tuf2</name>
    <name type="ordered locus">HCH_06231</name>
</gene>
<reference key="1">
    <citation type="journal article" date="2005" name="Nucleic Acids Res.">
        <title>Genomic blueprint of Hahella chejuensis, a marine microbe producing an algicidal agent.</title>
        <authorList>
            <person name="Jeong H."/>
            <person name="Yim J.H."/>
            <person name="Lee C."/>
            <person name="Choi S.-H."/>
            <person name="Park Y.K."/>
            <person name="Yoon S.H."/>
            <person name="Hur C.-G."/>
            <person name="Kang H.-Y."/>
            <person name="Kim D."/>
            <person name="Lee H.H."/>
            <person name="Park K.H."/>
            <person name="Park S.-H."/>
            <person name="Park H.-S."/>
            <person name="Lee H.K."/>
            <person name="Oh T.K."/>
            <person name="Kim J.F."/>
        </authorList>
    </citation>
    <scope>NUCLEOTIDE SEQUENCE [LARGE SCALE GENOMIC DNA]</scope>
    <source>
        <strain>KCTC 2396</strain>
    </source>
</reference>
<feature type="chain" id="PRO_0000337402" description="Elongation factor Tu">
    <location>
        <begin position="1"/>
        <end position="397"/>
    </location>
</feature>
<feature type="domain" description="tr-type G">
    <location>
        <begin position="10"/>
        <end position="207"/>
    </location>
</feature>
<feature type="region of interest" description="G1" evidence="1">
    <location>
        <begin position="19"/>
        <end position="26"/>
    </location>
</feature>
<feature type="region of interest" description="G2" evidence="1">
    <location>
        <begin position="60"/>
        <end position="64"/>
    </location>
</feature>
<feature type="region of interest" description="G3" evidence="1">
    <location>
        <begin position="81"/>
        <end position="84"/>
    </location>
</feature>
<feature type="region of interest" description="G4" evidence="1">
    <location>
        <begin position="136"/>
        <end position="139"/>
    </location>
</feature>
<feature type="region of interest" description="G5" evidence="1">
    <location>
        <begin position="174"/>
        <end position="176"/>
    </location>
</feature>
<feature type="binding site" evidence="2">
    <location>
        <begin position="19"/>
        <end position="26"/>
    </location>
    <ligand>
        <name>GTP</name>
        <dbReference type="ChEBI" id="CHEBI:37565"/>
    </ligand>
</feature>
<feature type="binding site" evidence="2">
    <location>
        <position position="26"/>
    </location>
    <ligand>
        <name>Mg(2+)</name>
        <dbReference type="ChEBI" id="CHEBI:18420"/>
    </ligand>
</feature>
<feature type="binding site" evidence="2">
    <location>
        <begin position="81"/>
        <end position="85"/>
    </location>
    <ligand>
        <name>GTP</name>
        <dbReference type="ChEBI" id="CHEBI:37565"/>
    </ligand>
</feature>
<feature type="binding site" evidence="2">
    <location>
        <begin position="136"/>
        <end position="139"/>
    </location>
    <ligand>
        <name>GTP</name>
        <dbReference type="ChEBI" id="CHEBI:37565"/>
    </ligand>
</feature>
<name>EFTU_HAHCH</name>
<accession>Q2S8Z8</accession>
<evidence type="ECO:0000250" key="1"/>
<evidence type="ECO:0000255" key="2">
    <source>
        <dbReference type="HAMAP-Rule" id="MF_00118"/>
    </source>
</evidence>
<dbReference type="EC" id="3.6.5.3" evidence="2"/>
<dbReference type="EMBL" id="CP000155">
    <property type="protein sequence ID" value="ABC32864.1"/>
    <property type="molecule type" value="Genomic_DNA"/>
</dbReference>
<dbReference type="EMBL" id="CP000155">
    <property type="protein sequence ID" value="ABC32876.1"/>
    <property type="molecule type" value="Genomic_DNA"/>
</dbReference>
<dbReference type="SMR" id="Q2S8Z8"/>
<dbReference type="STRING" id="349521.HCH_06219"/>
<dbReference type="KEGG" id="hch:HCH_06219"/>
<dbReference type="KEGG" id="hch:HCH_06231"/>
<dbReference type="eggNOG" id="COG0050">
    <property type="taxonomic scope" value="Bacteria"/>
</dbReference>
<dbReference type="HOGENOM" id="CLU_007265_0_0_6"/>
<dbReference type="OrthoDB" id="9803139at2"/>
<dbReference type="Proteomes" id="UP000000238">
    <property type="component" value="Chromosome"/>
</dbReference>
<dbReference type="GO" id="GO:0005829">
    <property type="term" value="C:cytosol"/>
    <property type="evidence" value="ECO:0007669"/>
    <property type="project" value="TreeGrafter"/>
</dbReference>
<dbReference type="GO" id="GO:0005525">
    <property type="term" value="F:GTP binding"/>
    <property type="evidence" value="ECO:0007669"/>
    <property type="project" value="UniProtKB-UniRule"/>
</dbReference>
<dbReference type="GO" id="GO:0003924">
    <property type="term" value="F:GTPase activity"/>
    <property type="evidence" value="ECO:0007669"/>
    <property type="project" value="InterPro"/>
</dbReference>
<dbReference type="GO" id="GO:0097216">
    <property type="term" value="F:guanosine tetraphosphate binding"/>
    <property type="evidence" value="ECO:0007669"/>
    <property type="project" value="UniProtKB-ARBA"/>
</dbReference>
<dbReference type="GO" id="GO:0003746">
    <property type="term" value="F:translation elongation factor activity"/>
    <property type="evidence" value="ECO:0007669"/>
    <property type="project" value="UniProtKB-UniRule"/>
</dbReference>
<dbReference type="CDD" id="cd01884">
    <property type="entry name" value="EF_Tu"/>
    <property type="match status" value="1"/>
</dbReference>
<dbReference type="CDD" id="cd03697">
    <property type="entry name" value="EFTU_II"/>
    <property type="match status" value="1"/>
</dbReference>
<dbReference type="CDD" id="cd03707">
    <property type="entry name" value="EFTU_III"/>
    <property type="match status" value="1"/>
</dbReference>
<dbReference type="FunFam" id="2.40.30.10:FF:000001">
    <property type="entry name" value="Elongation factor Tu"/>
    <property type="match status" value="1"/>
</dbReference>
<dbReference type="FunFam" id="3.40.50.300:FF:000003">
    <property type="entry name" value="Elongation factor Tu"/>
    <property type="match status" value="1"/>
</dbReference>
<dbReference type="Gene3D" id="3.40.50.300">
    <property type="entry name" value="P-loop containing nucleotide triphosphate hydrolases"/>
    <property type="match status" value="1"/>
</dbReference>
<dbReference type="Gene3D" id="2.40.30.10">
    <property type="entry name" value="Translation factors"/>
    <property type="match status" value="2"/>
</dbReference>
<dbReference type="HAMAP" id="MF_00118_B">
    <property type="entry name" value="EF_Tu_B"/>
    <property type="match status" value="1"/>
</dbReference>
<dbReference type="InterPro" id="IPR041709">
    <property type="entry name" value="EF-Tu_GTP-bd"/>
</dbReference>
<dbReference type="InterPro" id="IPR050055">
    <property type="entry name" value="EF-Tu_GTPase"/>
</dbReference>
<dbReference type="InterPro" id="IPR004161">
    <property type="entry name" value="EFTu-like_2"/>
</dbReference>
<dbReference type="InterPro" id="IPR033720">
    <property type="entry name" value="EFTU_2"/>
</dbReference>
<dbReference type="InterPro" id="IPR031157">
    <property type="entry name" value="G_TR_CS"/>
</dbReference>
<dbReference type="InterPro" id="IPR027417">
    <property type="entry name" value="P-loop_NTPase"/>
</dbReference>
<dbReference type="InterPro" id="IPR005225">
    <property type="entry name" value="Small_GTP-bd"/>
</dbReference>
<dbReference type="InterPro" id="IPR000795">
    <property type="entry name" value="T_Tr_GTP-bd_dom"/>
</dbReference>
<dbReference type="InterPro" id="IPR009000">
    <property type="entry name" value="Transl_B-barrel_sf"/>
</dbReference>
<dbReference type="InterPro" id="IPR009001">
    <property type="entry name" value="Transl_elong_EF1A/Init_IF2_C"/>
</dbReference>
<dbReference type="InterPro" id="IPR004541">
    <property type="entry name" value="Transl_elong_EFTu/EF1A_bac/org"/>
</dbReference>
<dbReference type="InterPro" id="IPR004160">
    <property type="entry name" value="Transl_elong_EFTu/EF1A_C"/>
</dbReference>
<dbReference type="NCBIfam" id="TIGR00485">
    <property type="entry name" value="EF-Tu"/>
    <property type="match status" value="1"/>
</dbReference>
<dbReference type="NCBIfam" id="NF000766">
    <property type="entry name" value="PRK00049.1"/>
    <property type="match status" value="1"/>
</dbReference>
<dbReference type="NCBIfam" id="NF009372">
    <property type="entry name" value="PRK12735.1"/>
    <property type="match status" value="1"/>
</dbReference>
<dbReference type="NCBIfam" id="NF009373">
    <property type="entry name" value="PRK12736.1"/>
    <property type="match status" value="1"/>
</dbReference>
<dbReference type="NCBIfam" id="TIGR00231">
    <property type="entry name" value="small_GTP"/>
    <property type="match status" value="1"/>
</dbReference>
<dbReference type="PANTHER" id="PTHR43721:SF22">
    <property type="entry name" value="ELONGATION FACTOR TU, MITOCHONDRIAL"/>
    <property type="match status" value="1"/>
</dbReference>
<dbReference type="PANTHER" id="PTHR43721">
    <property type="entry name" value="ELONGATION FACTOR TU-RELATED"/>
    <property type="match status" value="1"/>
</dbReference>
<dbReference type="Pfam" id="PF00009">
    <property type="entry name" value="GTP_EFTU"/>
    <property type="match status" value="1"/>
</dbReference>
<dbReference type="Pfam" id="PF03144">
    <property type="entry name" value="GTP_EFTU_D2"/>
    <property type="match status" value="1"/>
</dbReference>
<dbReference type="Pfam" id="PF03143">
    <property type="entry name" value="GTP_EFTU_D3"/>
    <property type="match status" value="1"/>
</dbReference>
<dbReference type="PRINTS" id="PR00315">
    <property type="entry name" value="ELONGATNFCT"/>
</dbReference>
<dbReference type="SUPFAM" id="SSF50465">
    <property type="entry name" value="EF-Tu/eEF-1alpha/eIF2-gamma C-terminal domain"/>
    <property type="match status" value="1"/>
</dbReference>
<dbReference type="SUPFAM" id="SSF52540">
    <property type="entry name" value="P-loop containing nucleoside triphosphate hydrolases"/>
    <property type="match status" value="1"/>
</dbReference>
<dbReference type="SUPFAM" id="SSF50447">
    <property type="entry name" value="Translation proteins"/>
    <property type="match status" value="1"/>
</dbReference>
<dbReference type="PROSITE" id="PS00301">
    <property type="entry name" value="G_TR_1"/>
    <property type="match status" value="1"/>
</dbReference>
<dbReference type="PROSITE" id="PS51722">
    <property type="entry name" value="G_TR_2"/>
    <property type="match status" value="1"/>
</dbReference>